<evidence type="ECO:0000255" key="1">
    <source>
        <dbReference type="HAMAP-Rule" id="MF_01659"/>
    </source>
</evidence>
<keyword id="KW-0460">Magnesium</keyword>
<keyword id="KW-0464">Manganese</keyword>
<keyword id="KW-0474">Menaquinone biosynthesis</keyword>
<keyword id="KW-0479">Metal-binding</keyword>
<keyword id="KW-1185">Reference proteome</keyword>
<keyword id="KW-0786">Thiamine pyrophosphate</keyword>
<keyword id="KW-0808">Transferase</keyword>
<proteinExistence type="inferred from homology"/>
<feature type="chain" id="PRO_1000187059" description="2-succinyl-5-enolpyruvyl-6-hydroxy-3-cyclohexene-1-carboxylate synthase">
    <location>
        <begin position="1"/>
        <end position="533"/>
    </location>
</feature>
<dbReference type="EC" id="2.2.1.9" evidence="1"/>
<dbReference type="EMBL" id="CP001071">
    <property type="protein sequence ID" value="ACD05913.1"/>
    <property type="molecule type" value="Genomic_DNA"/>
</dbReference>
<dbReference type="RefSeq" id="WP_012421127.1">
    <property type="nucleotide sequence ID" value="NC_010655.1"/>
</dbReference>
<dbReference type="SMR" id="B2UPN5"/>
<dbReference type="STRING" id="349741.Amuc_2104"/>
<dbReference type="PaxDb" id="349741-Amuc_2104"/>
<dbReference type="KEGG" id="amu:Amuc_2104"/>
<dbReference type="eggNOG" id="COG1165">
    <property type="taxonomic scope" value="Bacteria"/>
</dbReference>
<dbReference type="HOGENOM" id="CLU_006051_3_0_0"/>
<dbReference type="OrthoDB" id="9791859at2"/>
<dbReference type="UniPathway" id="UPA00079"/>
<dbReference type="UniPathway" id="UPA01057">
    <property type="reaction ID" value="UER00164"/>
</dbReference>
<dbReference type="Proteomes" id="UP000001031">
    <property type="component" value="Chromosome"/>
</dbReference>
<dbReference type="GO" id="GO:0070204">
    <property type="term" value="F:2-succinyl-5-enolpyruvyl-6-hydroxy-3-cyclohexene-1-carboxylic-acid synthase activity"/>
    <property type="evidence" value="ECO:0007669"/>
    <property type="project" value="UniProtKB-UniRule"/>
</dbReference>
<dbReference type="GO" id="GO:0000287">
    <property type="term" value="F:magnesium ion binding"/>
    <property type="evidence" value="ECO:0007669"/>
    <property type="project" value="UniProtKB-UniRule"/>
</dbReference>
<dbReference type="GO" id="GO:0030145">
    <property type="term" value="F:manganese ion binding"/>
    <property type="evidence" value="ECO:0007669"/>
    <property type="project" value="UniProtKB-UniRule"/>
</dbReference>
<dbReference type="GO" id="GO:0030976">
    <property type="term" value="F:thiamine pyrophosphate binding"/>
    <property type="evidence" value="ECO:0007669"/>
    <property type="project" value="UniProtKB-UniRule"/>
</dbReference>
<dbReference type="GO" id="GO:0009234">
    <property type="term" value="P:menaquinone biosynthetic process"/>
    <property type="evidence" value="ECO:0007669"/>
    <property type="project" value="UniProtKB-UniRule"/>
</dbReference>
<dbReference type="Gene3D" id="3.40.50.970">
    <property type="match status" value="2"/>
</dbReference>
<dbReference type="Gene3D" id="3.40.50.1220">
    <property type="entry name" value="TPP-binding domain"/>
    <property type="match status" value="1"/>
</dbReference>
<dbReference type="HAMAP" id="MF_01659">
    <property type="entry name" value="MenD"/>
    <property type="match status" value="1"/>
</dbReference>
<dbReference type="InterPro" id="IPR004433">
    <property type="entry name" value="MenaQ_synth_MenD"/>
</dbReference>
<dbReference type="InterPro" id="IPR029061">
    <property type="entry name" value="THDP-binding"/>
</dbReference>
<dbReference type="InterPro" id="IPR012001">
    <property type="entry name" value="Thiamin_PyroP_enz_TPP-bd_dom"/>
</dbReference>
<dbReference type="NCBIfam" id="TIGR00173">
    <property type="entry name" value="menD"/>
    <property type="match status" value="1"/>
</dbReference>
<dbReference type="PANTHER" id="PTHR42916">
    <property type="entry name" value="2-SUCCINYL-5-ENOLPYRUVYL-6-HYDROXY-3-CYCLOHEXENE-1-CARBOXYLATE SYNTHASE"/>
    <property type="match status" value="1"/>
</dbReference>
<dbReference type="PANTHER" id="PTHR42916:SF1">
    <property type="entry name" value="PROTEIN PHYLLO, CHLOROPLASTIC"/>
    <property type="match status" value="1"/>
</dbReference>
<dbReference type="Pfam" id="PF02776">
    <property type="entry name" value="TPP_enzyme_N"/>
    <property type="match status" value="1"/>
</dbReference>
<dbReference type="PIRSF" id="PIRSF004983">
    <property type="entry name" value="MenD"/>
    <property type="match status" value="1"/>
</dbReference>
<dbReference type="SUPFAM" id="SSF52518">
    <property type="entry name" value="Thiamin diphosphate-binding fold (THDP-binding)"/>
    <property type="match status" value="2"/>
</dbReference>
<organism>
    <name type="scientific">Akkermansia muciniphila (strain ATCC BAA-835 / DSM 22959 / JCM 33894 / BCRC 81048 / CCUG 64013 / CIP 107961 / Muc)</name>
    <dbReference type="NCBI Taxonomy" id="349741"/>
    <lineage>
        <taxon>Bacteria</taxon>
        <taxon>Pseudomonadati</taxon>
        <taxon>Verrucomicrobiota</taxon>
        <taxon>Verrucomicrobiia</taxon>
        <taxon>Verrucomicrobiales</taxon>
        <taxon>Akkermansiaceae</taxon>
        <taxon>Akkermansia</taxon>
    </lineage>
</organism>
<reference key="1">
    <citation type="journal article" date="2011" name="PLoS ONE">
        <title>The genome of Akkermansia muciniphila, a dedicated intestinal mucin degrader, and its use in exploring intestinal metagenomes.</title>
        <authorList>
            <person name="van Passel M.W."/>
            <person name="Kant R."/>
            <person name="Zoetendal E.G."/>
            <person name="Plugge C.M."/>
            <person name="Derrien M."/>
            <person name="Malfatti S.A."/>
            <person name="Chain P.S."/>
            <person name="Woyke T."/>
            <person name="Palva A."/>
            <person name="de Vos W.M."/>
            <person name="Smidt H."/>
        </authorList>
    </citation>
    <scope>NUCLEOTIDE SEQUENCE [LARGE SCALE GENOMIC DNA]</scope>
    <source>
        <strain>ATCC BAA-835 / DSM 22959 / JCM 33894 / BCRC 81048 / CCUG 64013 / CIP 107961 / Muc</strain>
    </source>
</reference>
<comment type="function">
    <text evidence="1">Catalyzes the thiamine diphosphate-dependent decarboxylation of 2-oxoglutarate and the subsequent addition of the resulting succinic semialdehyde-thiamine pyrophosphate anion to isochorismate to yield 2-succinyl-5-enolpyruvyl-6-hydroxy-3-cyclohexene-1-carboxylate (SEPHCHC).</text>
</comment>
<comment type="catalytic activity">
    <reaction evidence="1">
        <text>isochorismate + 2-oxoglutarate + H(+) = 5-enolpyruvoyl-6-hydroxy-2-succinyl-cyclohex-3-ene-1-carboxylate + CO2</text>
        <dbReference type="Rhea" id="RHEA:25593"/>
        <dbReference type="ChEBI" id="CHEBI:15378"/>
        <dbReference type="ChEBI" id="CHEBI:16526"/>
        <dbReference type="ChEBI" id="CHEBI:16810"/>
        <dbReference type="ChEBI" id="CHEBI:29780"/>
        <dbReference type="ChEBI" id="CHEBI:58818"/>
        <dbReference type="EC" id="2.2.1.9"/>
    </reaction>
</comment>
<comment type="cofactor">
    <cofactor evidence="1">
        <name>Mg(2+)</name>
        <dbReference type="ChEBI" id="CHEBI:18420"/>
    </cofactor>
    <cofactor evidence="1">
        <name>Mn(2+)</name>
        <dbReference type="ChEBI" id="CHEBI:29035"/>
    </cofactor>
</comment>
<comment type="cofactor">
    <cofactor evidence="1">
        <name>thiamine diphosphate</name>
        <dbReference type="ChEBI" id="CHEBI:58937"/>
    </cofactor>
    <text evidence="1">Binds 1 thiamine pyrophosphate per subunit.</text>
</comment>
<comment type="pathway">
    <text evidence="1">Quinol/quinone metabolism; 1,4-dihydroxy-2-naphthoate biosynthesis; 1,4-dihydroxy-2-naphthoate from chorismate: step 2/7.</text>
</comment>
<comment type="pathway">
    <text evidence="1">Quinol/quinone metabolism; menaquinone biosynthesis.</text>
</comment>
<comment type="subunit">
    <text evidence="1">Homodimer.</text>
</comment>
<comment type="similarity">
    <text evidence="1">Belongs to the TPP enzyme family. MenD subfamily.</text>
</comment>
<sequence length="533" mass="57783">MNSPASFVKSLLAQCCLGGICEWVVCPGARNMALLQVLAAAEDLVKWTHFDERSAAFFALGRIQDIGLPVAVVTTSGTAAAELLPAVVEAYYQRRPLLLLTADRPAACRGSAAPQAIEQADLFGIYAPTIDLETPESLPEDILQDWDYASPLHINVCLPDPDPAWNPGSCDLYPAEPPEENGFRGSLAELARALRFKSRGGLVVMIGGLDPTEQAPARWLANELKAPVVADATSGLREELAHLALTDADALLREHPPAVLLRLGDVPVARFWRDLEDIPATEVFSVTRTGFSGLARPSSVVTGDLEAILHALGDIDTVGDVNGLRAMNKRRKALMEELLITCPESEQAMVRSFSCFAADGDCIYLGNSMPVRYWNSFAQTSIPTENVRANRGTNGIDGQISGFLGVSARCSRSWALVGDLTAMYDSNALALLPQLDRGTRVLGVINNGGGGIFRTLPGADGQPETMRKLLVQPHAHSFKAIAEQWGMRYLTIRTAEDFDQLDSLEENSQTLVELIPDREQTEQIRLRLANAQV</sequence>
<name>MEND_AKKM8</name>
<accession>B2UPN5</accession>
<gene>
    <name evidence="1" type="primary">menD</name>
    <name type="ordered locus">Amuc_2104</name>
</gene>
<protein>
    <recommendedName>
        <fullName evidence="1">2-succinyl-5-enolpyruvyl-6-hydroxy-3-cyclohexene-1-carboxylate synthase</fullName>
        <shortName evidence="1">SEPHCHC synthase</shortName>
        <ecNumber evidence="1">2.2.1.9</ecNumber>
    </recommendedName>
    <alternativeName>
        <fullName evidence="1">Menaquinone biosynthesis protein MenD</fullName>
    </alternativeName>
</protein>